<protein>
    <recommendedName>
        <fullName evidence="2">Small ribosomal subunit protein uS7cz/uS7cy</fullName>
    </recommendedName>
    <alternativeName>
        <fullName>30S ribosomal protein S7, chloroplastic</fullName>
    </alternativeName>
</protein>
<proteinExistence type="inferred from homology"/>
<dbReference type="EMBL" id="EU431223">
    <property type="protein sequence ID" value="ABY86828.1"/>
    <property type="molecule type" value="Genomic_DNA"/>
</dbReference>
<dbReference type="EMBL" id="EU431223">
    <property type="protein sequence ID" value="ABY86841.1"/>
    <property type="molecule type" value="Genomic_DNA"/>
</dbReference>
<dbReference type="SMR" id="B1A980"/>
<dbReference type="KEGG" id="cpap:5878398"/>
<dbReference type="KEGG" id="cpap:5878415"/>
<dbReference type="OrthoDB" id="35139at2759"/>
<dbReference type="GO" id="GO:0009507">
    <property type="term" value="C:chloroplast"/>
    <property type="evidence" value="ECO:0007669"/>
    <property type="project" value="UniProtKB-SubCell"/>
</dbReference>
<dbReference type="GO" id="GO:0015935">
    <property type="term" value="C:small ribosomal subunit"/>
    <property type="evidence" value="ECO:0007669"/>
    <property type="project" value="InterPro"/>
</dbReference>
<dbReference type="GO" id="GO:0019843">
    <property type="term" value="F:rRNA binding"/>
    <property type="evidence" value="ECO:0007669"/>
    <property type="project" value="UniProtKB-UniRule"/>
</dbReference>
<dbReference type="GO" id="GO:0003735">
    <property type="term" value="F:structural constituent of ribosome"/>
    <property type="evidence" value="ECO:0007669"/>
    <property type="project" value="InterPro"/>
</dbReference>
<dbReference type="GO" id="GO:0006412">
    <property type="term" value="P:translation"/>
    <property type="evidence" value="ECO:0007669"/>
    <property type="project" value="UniProtKB-UniRule"/>
</dbReference>
<dbReference type="CDD" id="cd14871">
    <property type="entry name" value="uS7_Chloroplast"/>
    <property type="match status" value="1"/>
</dbReference>
<dbReference type="FunFam" id="1.10.455.10:FF:000001">
    <property type="entry name" value="30S ribosomal protein S7"/>
    <property type="match status" value="1"/>
</dbReference>
<dbReference type="Gene3D" id="1.10.455.10">
    <property type="entry name" value="Ribosomal protein S7 domain"/>
    <property type="match status" value="1"/>
</dbReference>
<dbReference type="HAMAP" id="MF_00480_B">
    <property type="entry name" value="Ribosomal_uS7_B"/>
    <property type="match status" value="1"/>
</dbReference>
<dbReference type="InterPro" id="IPR000235">
    <property type="entry name" value="Ribosomal_uS7"/>
</dbReference>
<dbReference type="InterPro" id="IPR005717">
    <property type="entry name" value="Ribosomal_uS7_bac/org-type"/>
</dbReference>
<dbReference type="InterPro" id="IPR020606">
    <property type="entry name" value="Ribosomal_uS7_CS"/>
</dbReference>
<dbReference type="InterPro" id="IPR023798">
    <property type="entry name" value="Ribosomal_uS7_dom"/>
</dbReference>
<dbReference type="InterPro" id="IPR036823">
    <property type="entry name" value="Ribosomal_uS7_dom_sf"/>
</dbReference>
<dbReference type="NCBIfam" id="TIGR01029">
    <property type="entry name" value="rpsG_bact"/>
    <property type="match status" value="1"/>
</dbReference>
<dbReference type="PANTHER" id="PTHR11205">
    <property type="entry name" value="RIBOSOMAL PROTEIN S7"/>
    <property type="match status" value="1"/>
</dbReference>
<dbReference type="Pfam" id="PF00177">
    <property type="entry name" value="Ribosomal_S7"/>
    <property type="match status" value="1"/>
</dbReference>
<dbReference type="PIRSF" id="PIRSF002122">
    <property type="entry name" value="RPS7p_RPS7a_RPS5e_RPS7o"/>
    <property type="match status" value="1"/>
</dbReference>
<dbReference type="SUPFAM" id="SSF47973">
    <property type="entry name" value="Ribosomal protein S7"/>
    <property type="match status" value="1"/>
</dbReference>
<dbReference type="PROSITE" id="PS00052">
    <property type="entry name" value="RIBOSOMAL_S7"/>
    <property type="match status" value="1"/>
</dbReference>
<sequence length="155" mass="17357">MSRRGTAEEKTAKSDPIYRNRLVNMLVNRILKHGKKSLAYQIIYRALKKIQQKTETNPLSVLRQAIRGVTPDIAVKARRVGGSTHQVPIEIGSTQGKALAIRWLLGASRKRPGRNMAFKLSSELVDAAKGSGDAIRKKEETHRMAEANRAFAHFR</sequence>
<feature type="chain" id="PRO_0000344329" description="Small ribosomal subunit protein uS7cz/uS7cy">
    <location>
        <begin position="1"/>
        <end position="155"/>
    </location>
</feature>
<geneLocation type="chloroplast"/>
<comment type="function">
    <text evidence="1">One of the primary rRNA binding proteins, it binds directly to 16S rRNA where it nucleates assembly of the head domain of the 30S subunit.</text>
</comment>
<comment type="subunit">
    <text evidence="1">Part of the 30S ribosomal subunit.</text>
</comment>
<comment type="subcellular location">
    <subcellularLocation>
        <location>Plastid</location>
        <location>Chloroplast</location>
    </subcellularLocation>
</comment>
<comment type="similarity">
    <text evidence="3">Belongs to the universal ribosomal protein uS7 family.</text>
</comment>
<name>RR7_CARPA</name>
<reference key="1">
    <citation type="journal article" date="2008" name="Nature">
        <title>The draft genome of the transgenic tropical fruit tree papaya (Carica papaya Linnaeus).</title>
        <authorList>
            <person name="Ming R."/>
            <person name="Hou S."/>
            <person name="Feng Y."/>
            <person name="Yu Q."/>
            <person name="Dionne-Laporte A."/>
            <person name="Saw J.H."/>
            <person name="Senin P."/>
            <person name="Wang W."/>
            <person name="Ly B.V."/>
            <person name="Lewis K.L."/>
            <person name="Salzberg S.L."/>
            <person name="Feng L."/>
            <person name="Jones M.R."/>
            <person name="Skelton R.L."/>
            <person name="Murray J.E."/>
            <person name="Chen C."/>
            <person name="Qian W."/>
            <person name="Shen J."/>
            <person name="Du P."/>
            <person name="Eustice M."/>
            <person name="Tong E."/>
            <person name="Tang H."/>
            <person name="Lyons E."/>
            <person name="Paull R.E."/>
            <person name="Michael T.P."/>
            <person name="Wall K."/>
            <person name="Rice D.W."/>
            <person name="Albert H."/>
            <person name="Wang M.L."/>
            <person name="Zhu Y.J."/>
            <person name="Schatz M."/>
            <person name="Nagarajan N."/>
            <person name="Acob R.A."/>
            <person name="Guan P."/>
            <person name="Blas A."/>
            <person name="Wai C.M."/>
            <person name="Ackerman C.M."/>
            <person name="Ren Y."/>
            <person name="Liu C."/>
            <person name="Wang J."/>
            <person name="Wang J."/>
            <person name="Na J.K."/>
            <person name="Shakirov E.V."/>
            <person name="Haas B."/>
            <person name="Thimmapuram J."/>
            <person name="Nelson D."/>
            <person name="Wang X."/>
            <person name="Bowers J.E."/>
            <person name="Gschwend A.R."/>
            <person name="Delcher A.L."/>
            <person name="Singh R."/>
            <person name="Suzuki J.Y."/>
            <person name="Tripathi S."/>
            <person name="Neupane K."/>
            <person name="Wei H."/>
            <person name="Irikura B."/>
            <person name="Paidi M."/>
            <person name="Jiang N."/>
            <person name="Zhang W."/>
            <person name="Presting G."/>
            <person name="Windsor A."/>
            <person name="Navajas-Perez R."/>
            <person name="Torres M.J."/>
            <person name="Feltus F.A."/>
            <person name="Porter B."/>
            <person name="Li Y."/>
            <person name="Burroughs A.M."/>
            <person name="Luo M.C."/>
            <person name="Liu L."/>
            <person name="Christopher D.A."/>
            <person name="Mount S.M."/>
            <person name="Moore P.H."/>
            <person name="Sugimura T."/>
            <person name="Jiang J."/>
            <person name="Schuler M.A."/>
            <person name="Friedman V."/>
            <person name="Mitchell-Olds T."/>
            <person name="Shippen D.E."/>
            <person name="dePamphilis C.W."/>
            <person name="Palmer J.D."/>
            <person name="Freeling M."/>
            <person name="Paterson A.H."/>
            <person name="Gonsalves D."/>
            <person name="Wang L."/>
            <person name="Alam M."/>
        </authorList>
    </citation>
    <scope>NUCLEOTIDE SEQUENCE [LARGE SCALE GENOMIC DNA]</scope>
    <source>
        <strain>cv. SunUp</strain>
    </source>
</reference>
<keyword id="KW-0150">Chloroplast</keyword>
<keyword id="KW-0934">Plastid</keyword>
<keyword id="KW-0687">Ribonucleoprotein</keyword>
<keyword id="KW-0689">Ribosomal protein</keyword>
<keyword id="KW-0694">RNA-binding</keyword>
<keyword id="KW-0699">rRNA-binding</keyword>
<gene>
    <name type="primary">rps7-A</name>
</gene>
<gene>
    <name type="primary">rps7-B</name>
</gene>
<evidence type="ECO:0000250" key="1"/>
<evidence type="ECO:0000255" key="2">
    <source>
        <dbReference type="HAMAP-Rule" id="MF_00480"/>
    </source>
</evidence>
<evidence type="ECO:0000305" key="3"/>
<organism>
    <name type="scientific">Carica papaya</name>
    <name type="common">Papaya</name>
    <dbReference type="NCBI Taxonomy" id="3649"/>
    <lineage>
        <taxon>Eukaryota</taxon>
        <taxon>Viridiplantae</taxon>
        <taxon>Streptophyta</taxon>
        <taxon>Embryophyta</taxon>
        <taxon>Tracheophyta</taxon>
        <taxon>Spermatophyta</taxon>
        <taxon>Magnoliopsida</taxon>
        <taxon>eudicotyledons</taxon>
        <taxon>Gunneridae</taxon>
        <taxon>Pentapetalae</taxon>
        <taxon>rosids</taxon>
        <taxon>malvids</taxon>
        <taxon>Brassicales</taxon>
        <taxon>Caricaceae</taxon>
        <taxon>Carica</taxon>
    </lineage>
</organism>
<accession>B1A980</accession>